<reference key="1">
    <citation type="journal article" date="2002" name="Nature">
        <title>The genome sequence of Schizosaccharomyces pombe.</title>
        <authorList>
            <person name="Wood V."/>
            <person name="Gwilliam R."/>
            <person name="Rajandream M.A."/>
            <person name="Lyne M.H."/>
            <person name="Lyne R."/>
            <person name="Stewart A."/>
            <person name="Sgouros J.G."/>
            <person name="Peat N."/>
            <person name="Hayles J."/>
            <person name="Baker S.G."/>
            <person name="Basham D."/>
            <person name="Bowman S."/>
            <person name="Brooks K."/>
            <person name="Brown D."/>
            <person name="Brown S."/>
            <person name="Chillingworth T."/>
            <person name="Churcher C.M."/>
            <person name="Collins M."/>
            <person name="Connor R."/>
            <person name="Cronin A."/>
            <person name="Davis P."/>
            <person name="Feltwell T."/>
            <person name="Fraser A."/>
            <person name="Gentles S."/>
            <person name="Goble A."/>
            <person name="Hamlin N."/>
            <person name="Harris D.E."/>
            <person name="Hidalgo J."/>
            <person name="Hodgson G."/>
            <person name="Holroyd S."/>
            <person name="Hornsby T."/>
            <person name="Howarth S."/>
            <person name="Huckle E.J."/>
            <person name="Hunt S."/>
            <person name="Jagels K."/>
            <person name="James K.D."/>
            <person name="Jones L."/>
            <person name="Jones M."/>
            <person name="Leather S."/>
            <person name="McDonald S."/>
            <person name="McLean J."/>
            <person name="Mooney P."/>
            <person name="Moule S."/>
            <person name="Mungall K.L."/>
            <person name="Murphy L.D."/>
            <person name="Niblett D."/>
            <person name="Odell C."/>
            <person name="Oliver K."/>
            <person name="O'Neil S."/>
            <person name="Pearson D."/>
            <person name="Quail M.A."/>
            <person name="Rabbinowitsch E."/>
            <person name="Rutherford K.M."/>
            <person name="Rutter S."/>
            <person name="Saunders D."/>
            <person name="Seeger K."/>
            <person name="Sharp S."/>
            <person name="Skelton J."/>
            <person name="Simmonds M.N."/>
            <person name="Squares R."/>
            <person name="Squares S."/>
            <person name="Stevens K."/>
            <person name="Taylor K."/>
            <person name="Taylor R.G."/>
            <person name="Tivey A."/>
            <person name="Walsh S.V."/>
            <person name="Warren T."/>
            <person name="Whitehead S."/>
            <person name="Woodward J.R."/>
            <person name="Volckaert G."/>
            <person name="Aert R."/>
            <person name="Robben J."/>
            <person name="Grymonprez B."/>
            <person name="Weltjens I."/>
            <person name="Vanstreels E."/>
            <person name="Rieger M."/>
            <person name="Schaefer M."/>
            <person name="Mueller-Auer S."/>
            <person name="Gabel C."/>
            <person name="Fuchs M."/>
            <person name="Duesterhoeft A."/>
            <person name="Fritzc C."/>
            <person name="Holzer E."/>
            <person name="Moestl D."/>
            <person name="Hilbert H."/>
            <person name="Borzym K."/>
            <person name="Langer I."/>
            <person name="Beck A."/>
            <person name="Lehrach H."/>
            <person name="Reinhardt R."/>
            <person name="Pohl T.M."/>
            <person name="Eger P."/>
            <person name="Zimmermann W."/>
            <person name="Wedler H."/>
            <person name="Wambutt R."/>
            <person name="Purnelle B."/>
            <person name="Goffeau A."/>
            <person name="Cadieu E."/>
            <person name="Dreano S."/>
            <person name="Gloux S."/>
            <person name="Lelaure V."/>
            <person name="Mottier S."/>
            <person name="Galibert F."/>
            <person name="Aves S.J."/>
            <person name="Xiang Z."/>
            <person name="Hunt C."/>
            <person name="Moore K."/>
            <person name="Hurst S.M."/>
            <person name="Lucas M."/>
            <person name="Rochet M."/>
            <person name="Gaillardin C."/>
            <person name="Tallada V.A."/>
            <person name="Garzon A."/>
            <person name="Thode G."/>
            <person name="Daga R.R."/>
            <person name="Cruzado L."/>
            <person name="Jimenez J."/>
            <person name="Sanchez M."/>
            <person name="del Rey F."/>
            <person name="Benito J."/>
            <person name="Dominguez A."/>
            <person name="Revuelta J.L."/>
            <person name="Moreno S."/>
            <person name="Armstrong J."/>
            <person name="Forsburg S.L."/>
            <person name="Cerutti L."/>
            <person name="Lowe T."/>
            <person name="McCombie W.R."/>
            <person name="Paulsen I."/>
            <person name="Potashkin J."/>
            <person name="Shpakovski G.V."/>
            <person name="Ussery D."/>
            <person name="Barrell B.G."/>
            <person name="Nurse P."/>
        </authorList>
    </citation>
    <scope>NUCLEOTIDE SEQUENCE [LARGE SCALE GENOMIC DNA]</scope>
    <source>
        <strain>972 / ATCC 24843</strain>
    </source>
</reference>
<keyword id="KW-1185">Reference proteome</keyword>
<sequence length="196" mass="22582">METNGSFSGARLVDGKWIIPESRRKDGSVRRERAVKPGYTAPEDIKRYRPGRGNFASLEKQMKKLQLSNDASTSKSIDRPPISELEKEKLERPLSNKKKEKNDHKAESLKHDYDSVGEKRISKDSVKHLDKTYSSIDSKKDFKYNFPKTQAPEWRRGAKPLSKTSEPSVYSEKMSKRENKKSINTVDKKTGYKEKE</sequence>
<name>YHY1_SCHPO</name>
<evidence type="ECO:0000256" key="1">
    <source>
        <dbReference type="SAM" id="MobiDB-lite"/>
    </source>
</evidence>
<accession>Q9USW8</accession>
<accession>O74376</accession>
<gene>
    <name type="ORF">SPBC19C7.01</name>
    <name type="ORF">SPBC32F12.13c</name>
</gene>
<proteinExistence type="predicted"/>
<organism>
    <name type="scientific">Schizosaccharomyces pombe (strain 972 / ATCC 24843)</name>
    <name type="common">Fission yeast</name>
    <dbReference type="NCBI Taxonomy" id="284812"/>
    <lineage>
        <taxon>Eukaryota</taxon>
        <taxon>Fungi</taxon>
        <taxon>Dikarya</taxon>
        <taxon>Ascomycota</taxon>
        <taxon>Taphrinomycotina</taxon>
        <taxon>Schizosaccharomycetes</taxon>
        <taxon>Schizosaccharomycetales</taxon>
        <taxon>Schizosaccharomycetaceae</taxon>
        <taxon>Schizosaccharomyces</taxon>
    </lineage>
</organism>
<dbReference type="EMBL" id="CU329671">
    <property type="protein sequence ID" value="CAA19374.1"/>
    <property type="molecule type" value="Genomic_DNA"/>
</dbReference>
<dbReference type="PIR" id="T40237">
    <property type="entry name" value="T40237"/>
</dbReference>
<dbReference type="RefSeq" id="NP_596157.1">
    <property type="nucleotide sequence ID" value="NM_001022076.2"/>
</dbReference>
<dbReference type="BioGRID" id="277317">
    <property type="interactions" value="20"/>
</dbReference>
<dbReference type="FunCoup" id="Q9USW8">
    <property type="interactions" value="212"/>
</dbReference>
<dbReference type="STRING" id="284812.Q9USW8"/>
<dbReference type="iPTMnet" id="Q9USW8"/>
<dbReference type="PaxDb" id="4896-SPBC19C7.01.1"/>
<dbReference type="EnsemblFungi" id="SPBC19C7.01.1">
    <property type="protein sequence ID" value="SPBC19C7.01.1:pep"/>
    <property type="gene ID" value="SPBC19C7.01"/>
</dbReference>
<dbReference type="GeneID" id="2540798"/>
<dbReference type="KEGG" id="spo:2540798"/>
<dbReference type="PomBase" id="SPBC19C7.01"/>
<dbReference type="VEuPathDB" id="FungiDB:SPBC19C7.01"/>
<dbReference type="eggNOG" id="ENOG502RWV1">
    <property type="taxonomic scope" value="Eukaryota"/>
</dbReference>
<dbReference type="HOGENOM" id="CLU_1343947_0_0_1"/>
<dbReference type="InParanoid" id="Q9USW8"/>
<dbReference type="PRO" id="PR:Q9USW8"/>
<dbReference type="Proteomes" id="UP000002485">
    <property type="component" value="Chromosome II"/>
</dbReference>
<dbReference type="GO" id="GO:0005737">
    <property type="term" value="C:cytoplasm"/>
    <property type="evidence" value="ECO:0000318"/>
    <property type="project" value="GO_Central"/>
</dbReference>
<dbReference type="GO" id="GO:0005829">
    <property type="term" value="C:cytosol"/>
    <property type="evidence" value="ECO:0007005"/>
    <property type="project" value="PomBase"/>
</dbReference>
<dbReference type="GO" id="GO:0035145">
    <property type="term" value="C:exon-exon junction complex"/>
    <property type="evidence" value="ECO:0000318"/>
    <property type="project" value="GO_Central"/>
</dbReference>
<dbReference type="GO" id="GO:0003723">
    <property type="term" value="F:RNA binding"/>
    <property type="evidence" value="ECO:0000318"/>
    <property type="project" value="GO_Central"/>
</dbReference>
<dbReference type="GO" id="GO:1903259">
    <property type="term" value="P:exon-exon junction complex disassembly"/>
    <property type="evidence" value="ECO:0000318"/>
    <property type="project" value="GO_Central"/>
</dbReference>
<dbReference type="GO" id="GO:0000184">
    <property type="term" value="P:nuclear-transcribed mRNA catabolic process, nonsense-mediated decay"/>
    <property type="evidence" value="ECO:0000250"/>
    <property type="project" value="PomBase"/>
</dbReference>
<dbReference type="InterPro" id="IPR039333">
    <property type="entry name" value="PYM1"/>
</dbReference>
<dbReference type="InterPro" id="IPR015362">
    <property type="entry name" value="WIBG_mago-bd"/>
</dbReference>
<dbReference type="InterPro" id="IPR036348">
    <property type="entry name" value="WIBG_N_sf"/>
</dbReference>
<dbReference type="PANTHER" id="PTHR22959:SF0">
    <property type="entry name" value="PARTNER OF Y14 AND MAGO"/>
    <property type="match status" value="1"/>
</dbReference>
<dbReference type="PANTHER" id="PTHR22959">
    <property type="entry name" value="PYM PROTEIN"/>
    <property type="match status" value="1"/>
</dbReference>
<dbReference type="Pfam" id="PF09282">
    <property type="entry name" value="Mago-bind"/>
    <property type="match status" value="1"/>
</dbReference>
<dbReference type="SMART" id="SM01273">
    <property type="entry name" value="Mago-bind"/>
    <property type="match status" value="1"/>
</dbReference>
<dbReference type="SUPFAM" id="SSF101931">
    <property type="entry name" value="Pym (Within the bgcn gene intron protein, WIBG), N-terminal domain"/>
    <property type="match status" value="1"/>
</dbReference>
<feature type="chain" id="PRO_0000116782" description="Uncharacterized protein C19C7.01">
    <location>
        <begin position="1"/>
        <end position="196"/>
    </location>
</feature>
<feature type="region of interest" description="Disordered" evidence="1">
    <location>
        <begin position="21"/>
        <end position="53"/>
    </location>
</feature>
<feature type="region of interest" description="Disordered" evidence="1">
    <location>
        <begin position="65"/>
        <end position="196"/>
    </location>
</feature>
<feature type="compositionally biased region" description="Basic and acidic residues" evidence="1">
    <location>
        <begin position="21"/>
        <end position="35"/>
    </location>
</feature>
<feature type="compositionally biased region" description="Polar residues" evidence="1">
    <location>
        <begin position="66"/>
        <end position="75"/>
    </location>
</feature>
<feature type="compositionally biased region" description="Basic and acidic residues" evidence="1">
    <location>
        <begin position="84"/>
        <end position="94"/>
    </location>
</feature>
<feature type="compositionally biased region" description="Basic and acidic residues" evidence="1">
    <location>
        <begin position="100"/>
        <end position="143"/>
    </location>
</feature>
<feature type="compositionally biased region" description="Basic and acidic residues" evidence="1">
    <location>
        <begin position="173"/>
        <end position="196"/>
    </location>
</feature>
<protein>
    <recommendedName>
        <fullName>Uncharacterized protein C19C7.01</fullName>
    </recommendedName>
</protein>